<proteinExistence type="inferred from homology"/>
<feature type="chain" id="PRO_0000046571" description="Probable low molecular weight protein-tyrosine-phosphatase EpsP">
    <location>
        <begin position="1"/>
        <end position="145"/>
    </location>
</feature>
<feature type="active site" description="Nucleophile" evidence="1">
    <location>
        <position position="9"/>
    </location>
</feature>
<feature type="active site" evidence="1">
    <location>
        <position position="15"/>
    </location>
</feature>
<feature type="active site" description="Proton donor" evidence="1">
    <location>
        <position position="114"/>
    </location>
</feature>
<comment type="function">
    <text>May be involved in assembly or function of the EPS I polymerization/export complex and/or the EpsB ATPase. Alternatively it may function in the removal of the terminal phosphate from C55-isoprenyl pyrophosphate in order to recycle the C55-isoprenyl phosphate lipid carrier used in the synthesis of polysaccharide repeat units.</text>
</comment>
<comment type="catalytic activity">
    <reaction>
        <text>O-phospho-L-tyrosyl-[protein] + H2O = L-tyrosyl-[protein] + phosphate</text>
        <dbReference type="Rhea" id="RHEA:10684"/>
        <dbReference type="Rhea" id="RHEA-COMP:10136"/>
        <dbReference type="Rhea" id="RHEA-COMP:20101"/>
        <dbReference type="ChEBI" id="CHEBI:15377"/>
        <dbReference type="ChEBI" id="CHEBI:43474"/>
        <dbReference type="ChEBI" id="CHEBI:46858"/>
        <dbReference type="ChEBI" id="CHEBI:61978"/>
        <dbReference type="EC" id="3.1.3.48"/>
    </reaction>
</comment>
<comment type="pathway">
    <text>Glycan metabolism; exopolysaccharide biosynthesis.</text>
</comment>
<comment type="similarity">
    <text evidence="2">Belongs to the low molecular weight phosphotyrosine protein phosphatase family.</text>
</comment>
<name>EPSP_RALSL</name>
<keyword id="KW-0378">Hydrolase</keyword>
<keyword id="KW-0448">Lipopolysaccharide biosynthesis</keyword>
<keyword id="KW-0904">Protein phosphatase</keyword>
<organism>
    <name type="scientific">Ralstonia solanacearum</name>
    <name type="common">Pseudomonas solanacearum</name>
    <dbReference type="NCBI Taxonomy" id="305"/>
    <lineage>
        <taxon>Bacteria</taxon>
        <taxon>Pseudomonadati</taxon>
        <taxon>Pseudomonadota</taxon>
        <taxon>Betaproteobacteria</taxon>
        <taxon>Burkholderiales</taxon>
        <taxon>Burkholderiaceae</taxon>
        <taxon>Ralstonia</taxon>
        <taxon>Ralstonia solanacearum species complex</taxon>
    </lineage>
</organism>
<evidence type="ECO:0000250" key="1">
    <source>
        <dbReference type="UniProtKB" id="P11064"/>
    </source>
</evidence>
<evidence type="ECO:0000305" key="2"/>
<accession>Q45408</accession>
<sequence>MIKTILVVCIGNICRSPMAQALLRQALPGVSVISAGIGALSGYPADPSAVEVMAQHGIDISEHRAQQLTGSLVNRADLILVMGGAQKREIQARHPSKTGSVFRLGEMEQFDIDDPYRKQMMAFEDALAMIQRGVDAWVPRIRALG</sequence>
<protein>
    <recommendedName>
        <fullName>Probable low molecular weight protein-tyrosine-phosphatase EpsP</fullName>
        <ecNumber>3.1.3.48</ecNumber>
    </recommendedName>
</protein>
<gene>
    <name type="primary">epsP</name>
</gene>
<reference key="1">
    <citation type="journal article" date="1995" name="Mol. Microbiol.">
        <title>Molecular characterization of the eps gene cluster of Pseudomonas solanacearum and its transcriptional regulation at a single promoter.</title>
        <authorList>
            <person name="Huang J."/>
            <person name="Schell M."/>
        </authorList>
    </citation>
    <scope>NUCLEOTIDE SEQUENCE [GENOMIC DNA]</scope>
    <source>
        <strain>AW</strain>
    </source>
</reference>
<dbReference type="EC" id="3.1.3.48"/>
<dbReference type="EMBL" id="U17898">
    <property type="protein sequence ID" value="AAA91623.1"/>
    <property type="molecule type" value="Genomic_DNA"/>
</dbReference>
<dbReference type="PIR" id="S77635">
    <property type="entry name" value="S77635"/>
</dbReference>
<dbReference type="SMR" id="Q45408"/>
<dbReference type="UniPathway" id="UPA00631"/>
<dbReference type="GO" id="GO:0004725">
    <property type="term" value="F:protein tyrosine phosphatase activity"/>
    <property type="evidence" value="ECO:0007669"/>
    <property type="project" value="UniProtKB-EC"/>
</dbReference>
<dbReference type="GO" id="GO:0009103">
    <property type="term" value="P:lipopolysaccharide biosynthetic process"/>
    <property type="evidence" value="ECO:0007669"/>
    <property type="project" value="UniProtKB-KW"/>
</dbReference>
<dbReference type="CDD" id="cd16343">
    <property type="entry name" value="LMWPTP"/>
    <property type="match status" value="1"/>
</dbReference>
<dbReference type="Gene3D" id="3.40.50.2300">
    <property type="match status" value="1"/>
</dbReference>
<dbReference type="InterPro" id="IPR050438">
    <property type="entry name" value="LMW_PTPase"/>
</dbReference>
<dbReference type="InterPro" id="IPR023485">
    <property type="entry name" value="Ptyr_pPase"/>
</dbReference>
<dbReference type="InterPro" id="IPR036196">
    <property type="entry name" value="Ptyr_pPase_sf"/>
</dbReference>
<dbReference type="InterPro" id="IPR017867">
    <property type="entry name" value="Tyr_phospatase_low_mol_wt"/>
</dbReference>
<dbReference type="PANTHER" id="PTHR11717">
    <property type="entry name" value="LOW MOLECULAR WEIGHT PROTEIN TYROSINE PHOSPHATASE"/>
    <property type="match status" value="1"/>
</dbReference>
<dbReference type="PANTHER" id="PTHR11717:SF31">
    <property type="entry name" value="LOW MOLECULAR WEIGHT PROTEIN-TYROSINE-PHOSPHATASE ETP-RELATED"/>
    <property type="match status" value="1"/>
</dbReference>
<dbReference type="Pfam" id="PF01451">
    <property type="entry name" value="LMWPc"/>
    <property type="match status" value="1"/>
</dbReference>
<dbReference type="PRINTS" id="PR00719">
    <property type="entry name" value="LMWPTPASE"/>
</dbReference>
<dbReference type="SMART" id="SM00226">
    <property type="entry name" value="LMWPc"/>
    <property type="match status" value="1"/>
</dbReference>
<dbReference type="SUPFAM" id="SSF52788">
    <property type="entry name" value="Phosphotyrosine protein phosphatases I"/>
    <property type="match status" value="1"/>
</dbReference>